<dbReference type="EC" id="1.2.1.3"/>
<dbReference type="EMBL" id="AE015929">
    <property type="protein sequence ID" value="AAO05319.1"/>
    <property type="molecule type" value="Genomic_DNA"/>
</dbReference>
<dbReference type="RefSeq" id="NP_765275.1">
    <property type="nucleotide sequence ID" value="NC_004461.1"/>
</dbReference>
<dbReference type="RefSeq" id="WP_001832742.1">
    <property type="nucleotide sequence ID" value="NZ_WBME01000021.1"/>
</dbReference>
<dbReference type="SMR" id="Q8CNI5"/>
<dbReference type="KEGG" id="sep:SE_1720"/>
<dbReference type="PATRIC" id="fig|176280.10.peg.1680"/>
<dbReference type="eggNOG" id="COG1012">
    <property type="taxonomic scope" value="Bacteria"/>
</dbReference>
<dbReference type="HOGENOM" id="CLU_005391_0_2_9"/>
<dbReference type="OrthoDB" id="9762913at2"/>
<dbReference type="Proteomes" id="UP000001411">
    <property type="component" value="Chromosome"/>
</dbReference>
<dbReference type="GO" id="GO:0004029">
    <property type="term" value="F:aldehyde dehydrogenase (NAD+) activity"/>
    <property type="evidence" value="ECO:0007669"/>
    <property type="project" value="UniProtKB-EC"/>
</dbReference>
<dbReference type="CDD" id="cd07138">
    <property type="entry name" value="ALDH_CddD_SSP0762"/>
    <property type="match status" value="1"/>
</dbReference>
<dbReference type="FunFam" id="3.40.309.10:FF:000012">
    <property type="entry name" value="Betaine aldehyde dehydrogenase"/>
    <property type="match status" value="1"/>
</dbReference>
<dbReference type="FunFam" id="3.40.605.10:FF:000007">
    <property type="entry name" value="NAD/NADP-dependent betaine aldehyde dehydrogenase"/>
    <property type="match status" value="1"/>
</dbReference>
<dbReference type="Gene3D" id="3.40.605.10">
    <property type="entry name" value="Aldehyde Dehydrogenase, Chain A, domain 1"/>
    <property type="match status" value="1"/>
</dbReference>
<dbReference type="Gene3D" id="3.40.309.10">
    <property type="entry name" value="Aldehyde Dehydrogenase, Chain A, domain 2"/>
    <property type="match status" value="1"/>
</dbReference>
<dbReference type="InterPro" id="IPR016161">
    <property type="entry name" value="Ald_DH/histidinol_DH"/>
</dbReference>
<dbReference type="InterPro" id="IPR016163">
    <property type="entry name" value="Ald_DH_C"/>
</dbReference>
<dbReference type="InterPro" id="IPR016160">
    <property type="entry name" value="Ald_DH_CS_CYS"/>
</dbReference>
<dbReference type="InterPro" id="IPR029510">
    <property type="entry name" value="Ald_DH_CS_GLU"/>
</dbReference>
<dbReference type="InterPro" id="IPR016162">
    <property type="entry name" value="Ald_DH_N"/>
</dbReference>
<dbReference type="InterPro" id="IPR015590">
    <property type="entry name" value="Aldehyde_DH_dom"/>
</dbReference>
<dbReference type="PANTHER" id="PTHR42804">
    <property type="entry name" value="ALDEHYDE DEHYDROGENASE"/>
    <property type="match status" value="1"/>
</dbReference>
<dbReference type="PANTHER" id="PTHR42804:SF1">
    <property type="entry name" value="ALDEHYDE DEHYDROGENASE-RELATED"/>
    <property type="match status" value="1"/>
</dbReference>
<dbReference type="Pfam" id="PF00171">
    <property type="entry name" value="Aldedh"/>
    <property type="match status" value="1"/>
</dbReference>
<dbReference type="SUPFAM" id="SSF53720">
    <property type="entry name" value="ALDH-like"/>
    <property type="match status" value="1"/>
</dbReference>
<dbReference type="PROSITE" id="PS00070">
    <property type="entry name" value="ALDEHYDE_DEHYDR_CYS"/>
    <property type="match status" value="1"/>
</dbReference>
<dbReference type="PROSITE" id="PS00687">
    <property type="entry name" value="ALDEHYDE_DEHYDR_GLU"/>
    <property type="match status" value="1"/>
</dbReference>
<protein>
    <recommendedName>
        <fullName>Putative aldehyde dehydrogenase SE_1720</fullName>
        <ecNumber>1.2.1.3</ecNumber>
    </recommendedName>
</protein>
<gene>
    <name type="ordered locus">SE_1720</name>
</gene>
<name>ALD1_STAES</name>
<keyword id="KW-0520">NAD</keyword>
<keyword id="KW-0560">Oxidoreductase</keyword>
<feature type="chain" id="PRO_0000293561" description="Putative aldehyde dehydrogenase SE_1720">
    <location>
        <begin position="1"/>
        <end position="475"/>
    </location>
</feature>
<feature type="active site" evidence="1">
    <location>
        <position position="245"/>
    </location>
</feature>
<feature type="active site" evidence="1">
    <location>
        <position position="279"/>
    </location>
</feature>
<feature type="binding site" evidence="1">
    <location>
        <begin position="201"/>
        <end position="207"/>
    </location>
    <ligand>
        <name>NAD(+)</name>
        <dbReference type="ChEBI" id="CHEBI:57540"/>
    </ligand>
</feature>
<reference key="1">
    <citation type="journal article" date="2003" name="Mol. Microbiol.">
        <title>Genome-based analysis of virulence genes in a non-biofilm-forming Staphylococcus epidermidis strain (ATCC 12228).</title>
        <authorList>
            <person name="Zhang Y.-Q."/>
            <person name="Ren S.-X."/>
            <person name="Li H.-L."/>
            <person name="Wang Y.-X."/>
            <person name="Fu G."/>
            <person name="Yang J."/>
            <person name="Qin Z.-Q."/>
            <person name="Miao Y.-G."/>
            <person name="Wang W.-Y."/>
            <person name="Chen R.-S."/>
            <person name="Shen Y."/>
            <person name="Chen Z."/>
            <person name="Yuan Z.-H."/>
            <person name="Zhao G.-P."/>
            <person name="Qu D."/>
            <person name="Danchin A."/>
            <person name="Wen Y.-M."/>
        </authorList>
    </citation>
    <scope>NUCLEOTIDE SEQUENCE [LARGE SCALE GENOMIC DNA]</scope>
    <source>
        <strain>ATCC 12228 / FDA PCI 1200</strain>
    </source>
</reference>
<comment type="catalytic activity">
    <reaction>
        <text>an aldehyde + NAD(+) + H2O = a carboxylate + NADH + 2 H(+)</text>
        <dbReference type="Rhea" id="RHEA:16185"/>
        <dbReference type="ChEBI" id="CHEBI:15377"/>
        <dbReference type="ChEBI" id="CHEBI:15378"/>
        <dbReference type="ChEBI" id="CHEBI:17478"/>
        <dbReference type="ChEBI" id="CHEBI:29067"/>
        <dbReference type="ChEBI" id="CHEBI:57540"/>
        <dbReference type="ChEBI" id="CHEBI:57945"/>
        <dbReference type="EC" id="1.2.1.3"/>
    </reaction>
</comment>
<comment type="similarity">
    <text evidence="2">Belongs to the aldehyde dehydrogenase family.</text>
</comment>
<evidence type="ECO:0000250" key="1"/>
<evidence type="ECO:0000305" key="2"/>
<accession>Q8CNI5</accession>
<organism>
    <name type="scientific">Staphylococcus epidermidis (strain ATCC 12228 / FDA PCI 1200)</name>
    <dbReference type="NCBI Taxonomy" id="176280"/>
    <lineage>
        <taxon>Bacteria</taxon>
        <taxon>Bacillati</taxon>
        <taxon>Bacillota</taxon>
        <taxon>Bacilli</taxon>
        <taxon>Bacillales</taxon>
        <taxon>Staphylococcaceae</taxon>
        <taxon>Staphylococcus</taxon>
    </lineage>
</organism>
<proteinExistence type="inferred from homology"/>
<sequence length="475" mass="51890">MRNFTKQYINGEWVDSASGETIDVINPATEEVMGKIAKGNEEDVNKAVDAADKVYLEFRHSSVEERRELLDKIVKEYQNRKNDLIEAITDELGAPLSVSENVHYQMGLNHFTAARDALDSFQFEEQRGDDLVVKEAIGVAGLVTPWNFPTNQTSLKLAAAFAAGSPVVLKPSEETPFAAIILAEIFDKVGVPKGVFNLVNGDGSGVGNPLSEHPKVRMMSFTGSGPTGSKIMEKAAKDFKKVSLELGGKSPYIVLDDVDVEEAANATTKKVVNNTGQVCTAGTRVLIPESIKEDYLTAVKEAFSKVKVGQPREEGTQVGPIISKKQFDQVQDYIDKGINEGAELFYGGPGKPEGLDKGYFARPTIFINVDNHMTIAQEEIFGPVMSVITYNNLDEAIEIANDTKYGLAGYVIGKDKDTLRHVARSIEAGTIEINEAGRKPDLPFGGYKESGLGREWGDYGIEEFLEVKSIAGYFK</sequence>